<evidence type="ECO:0000250" key="1">
    <source>
        <dbReference type="UniProtKB" id="Q10LF7"/>
    </source>
</evidence>
<evidence type="ECO:0000255" key="2">
    <source>
        <dbReference type="PROSITE-ProRule" id="PRU01058"/>
    </source>
</evidence>
<evidence type="ECO:0000256" key="3">
    <source>
        <dbReference type="SAM" id="MobiDB-lite"/>
    </source>
</evidence>
<evidence type="ECO:0000305" key="4"/>
<evidence type="ECO:0000312" key="5">
    <source>
        <dbReference type="EMBL" id="EAY90011.1"/>
    </source>
</evidence>
<evidence type="ECO:0000312" key="6">
    <source>
        <dbReference type="Proteomes" id="UP000007015"/>
    </source>
</evidence>
<dbReference type="EMBL" id="CM000128">
    <property type="protein sequence ID" value="EAY90011.1"/>
    <property type="molecule type" value="Genomic_DNA"/>
</dbReference>
<dbReference type="SMR" id="A2XGQ1"/>
<dbReference type="STRING" id="39946.A2XGQ1"/>
<dbReference type="EnsemblPlants" id="BGIOSGA012620-TA">
    <property type="protein sequence ID" value="BGIOSGA012620-PA"/>
    <property type="gene ID" value="BGIOSGA012620"/>
</dbReference>
<dbReference type="EnsemblPlants" id="OsGoSa_03g0017640.01">
    <property type="protein sequence ID" value="OsGoSa_03g0017640.01"/>
    <property type="gene ID" value="OsGoSa_03g0017640"/>
</dbReference>
<dbReference type="EnsemblPlants" id="OsKYG_03g0017580.01">
    <property type="protein sequence ID" value="OsKYG_03g0017580.01"/>
    <property type="gene ID" value="OsKYG_03g0017580"/>
</dbReference>
<dbReference type="EnsemblPlants" id="OsLaMu_03g0017420.01">
    <property type="protein sequence ID" value="OsLaMu_03g0017420.01"/>
    <property type="gene ID" value="OsLaMu_03g0017420"/>
</dbReference>
<dbReference type="EnsemblPlants" id="OsLiXu_03g0017520.01">
    <property type="protein sequence ID" value="OsLiXu_03g0017520.01"/>
    <property type="gene ID" value="OsLiXu_03g0017520"/>
</dbReference>
<dbReference type="EnsemblPlants" id="OsMH63_03G017580_01">
    <property type="protein sequence ID" value="OsMH63_03G017580_01"/>
    <property type="gene ID" value="OsMH63_03G017580"/>
</dbReference>
<dbReference type="EnsemblPlants" id="OsZS97_03G017490_01">
    <property type="protein sequence ID" value="OsZS97_03G017490_01"/>
    <property type="gene ID" value="OsZS97_03G017490"/>
</dbReference>
<dbReference type="Gramene" id="BGIOSGA012620-TA">
    <property type="protein sequence ID" value="BGIOSGA012620-PA"/>
    <property type="gene ID" value="BGIOSGA012620"/>
</dbReference>
<dbReference type="Gramene" id="OsGoSa_03g0017640.01">
    <property type="protein sequence ID" value="OsGoSa_03g0017640.01"/>
    <property type="gene ID" value="OsGoSa_03g0017640"/>
</dbReference>
<dbReference type="Gramene" id="OsKYG_03g0017580.01">
    <property type="protein sequence ID" value="OsKYG_03g0017580.01"/>
    <property type="gene ID" value="OsKYG_03g0017580"/>
</dbReference>
<dbReference type="Gramene" id="OsLaMu_03g0017420.01">
    <property type="protein sequence ID" value="OsLaMu_03g0017420.01"/>
    <property type="gene ID" value="OsLaMu_03g0017420"/>
</dbReference>
<dbReference type="Gramene" id="OsLiXu_03g0017520.01">
    <property type="protein sequence ID" value="OsLiXu_03g0017520.01"/>
    <property type="gene ID" value="OsLiXu_03g0017520"/>
</dbReference>
<dbReference type="Gramene" id="OsMH63_03G017580_01">
    <property type="protein sequence ID" value="OsMH63_03G017580_01"/>
    <property type="gene ID" value="OsMH63_03G017580"/>
</dbReference>
<dbReference type="Gramene" id="OsZS97_03G017490_01">
    <property type="protein sequence ID" value="OsZS97_03G017490_01"/>
    <property type="gene ID" value="OsZS97_03G017490"/>
</dbReference>
<dbReference type="HOGENOM" id="CLU_011106_4_2_1"/>
<dbReference type="OMA" id="RTQGFNH"/>
<dbReference type="OrthoDB" id="444945at2759"/>
<dbReference type="Proteomes" id="UP000007015">
    <property type="component" value="Chromosome 3"/>
</dbReference>
<dbReference type="GO" id="GO:0005730">
    <property type="term" value="C:nucleolus"/>
    <property type="evidence" value="ECO:0007669"/>
    <property type="project" value="UniProtKB-SubCell"/>
</dbReference>
<dbReference type="GO" id="GO:0005525">
    <property type="term" value="F:GTP binding"/>
    <property type="evidence" value="ECO:0007669"/>
    <property type="project" value="UniProtKB-KW"/>
</dbReference>
<dbReference type="GO" id="GO:0016787">
    <property type="term" value="F:hydrolase activity"/>
    <property type="evidence" value="ECO:0007669"/>
    <property type="project" value="UniProtKB-KW"/>
</dbReference>
<dbReference type="CDD" id="cd01858">
    <property type="entry name" value="NGP_1"/>
    <property type="match status" value="1"/>
</dbReference>
<dbReference type="FunFam" id="3.40.50.300:FF:000559">
    <property type="entry name" value="Nuclear/nucleolar GTPase 2"/>
    <property type="match status" value="1"/>
</dbReference>
<dbReference type="FunFam" id="1.10.1580.10:FF:000001">
    <property type="entry name" value="Nucleolar GTP-binding protein 2"/>
    <property type="match status" value="1"/>
</dbReference>
<dbReference type="Gene3D" id="1.10.1580.10">
    <property type="match status" value="1"/>
</dbReference>
<dbReference type="Gene3D" id="3.40.50.300">
    <property type="entry name" value="P-loop containing nucleotide triphosphate hydrolases"/>
    <property type="match status" value="1"/>
</dbReference>
<dbReference type="InterPro" id="IPR030378">
    <property type="entry name" value="G_CP_dom"/>
</dbReference>
<dbReference type="InterPro" id="IPR024929">
    <property type="entry name" value="GNL2_CP_dom"/>
</dbReference>
<dbReference type="InterPro" id="IPR006073">
    <property type="entry name" value="GTP-bd"/>
</dbReference>
<dbReference type="InterPro" id="IPR023179">
    <property type="entry name" value="GTP-bd_ortho_bundle_sf"/>
</dbReference>
<dbReference type="InterPro" id="IPR012971">
    <property type="entry name" value="NOG2_N_dom"/>
</dbReference>
<dbReference type="InterPro" id="IPR027417">
    <property type="entry name" value="P-loop_NTPase"/>
</dbReference>
<dbReference type="InterPro" id="IPR050755">
    <property type="entry name" value="TRAFAC_YlqF/YawG_RiboMat"/>
</dbReference>
<dbReference type="PANTHER" id="PTHR11089">
    <property type="entry name" value="GTP-BINDING PROTEIN-RELATED"/>
    <property type="match status" value="1"/>
</dbReference>
<dbReference type="PANTHER" id="PTHR11089:SF9">
    <property type="entry name" value="NUCLEOLAR GTP-BINDING PROTEIN 2"/>
    <property type="match status" value="1"/>
</dbReference>
<dbReference type="Pfam" id="PF01926">
    <property type="entry name" value="MMR_HSR1"/>
    <property type="match status" value="1"/>
</dbReference>
<dbReference type="Pfam" id="PF08153">
    <property type="entry name" value="NGP1NT"/>
    <property type="match status" value="1"/>
</dbReference>
<dbReference type="PRINTS" id="PR00326">
    <property type="entry name" value="GTP1OBG"/>
</dbReference>
<dbReference type="SUPFAM" id="SSF52540">
    <property type="entry name" value="P-loop containing nucleoside triphosphate hydrolases"/>
    <property type="match status" value="1"/>
</dbReference>
<dbReference type="PROSITE" id="PS51721">
    <property type="entry name" value="G_CP"/>
    <property type="match status" value="1"/>
</dbReference>
<name>NUG2_ORYSI</name>
<sequence length="535" mass="60167">MAKKKERAVNVSGKPRHSLDVNRANDKKGAGGGAGGGGGGRSAATVRRLKMYKMRPLRDRGGKILKHDLQSKELPNTRIEPDRRWFGNTRVVNQKELEFFREELQSRLSNNYNVILKERKLPLSLLQDHQKQARAHLLDTEPFEHAFGPKGKRKRPKLMALDYESLLKKADDSQGAFEDKHATAKLLKEEEEDGLRDLVRHTMFEKGQSKRIWGELYKVIDSSDVVVQVLDARDPMGTRCYHLEKHLKENAKHKHLVFLLNKCDLVPAWATKGWLRTLSKDYPTLAFHASINSSFGKGSLLSVLRQFARLKSDKQAISVGFVGYPNVGKSSVINTLRSKSVCKVAPIPGETKVWQYITLTKRIFLIDCPGVVYQNNDSETDIVLKGVVRVTNLADASEHIGEVLRRVKKEHLKRAYKIEDWVDDNDFLVQLSKTTGKLLRGGEPDLTTTAKMVLHDWQRGKIPFFVPPPQQGEDSPSETAEPVDKSDEEGVSSDRTAAAMKAIAGIISSQQQMNVPCQKEFGVTNEDSEVAEQSE</sequence>
<keyword id="KW-0342">GTP-binding</keyword>
<keyword id="KW-0378">Hydrolase</keyword>
<keyword id="KW-0547">Nucleotide-binding</keyword>
<keyword id="KW-0539">Nucleus</keyword>
<keyword id="KW-1185">Reference proteome</keyword>
<accession>A2XGQ1</accession>
<comment type="function">
    <text evidence="1">GTPase involved in pre-60S ribosomal subunit maturation.</text>
</comment>
<comment type="subcellular location">
    <subcellularLocation>
        <location evidence="1">Nucleus</location>
        <location evidence="1">Nucleolus</location>
    </subcellularLocation>
    <subcellularLocation>
        <location evidence="1">Nucleus</location>
    </subcellularLocation>
</comment>
<comment type="similarity">
    <text evidence="2">Belongs to the TRAFAC class YlqF/YawG GTPase family. RsgA subfamily.</text>
</comment>
<protein>
    <recommendedName>
        <fullName evidence="4">Nuclear/nucleolar GTPase 2</fullName>
    </recommendedName>
</protein>
<reference key="1">
    <citation type="journal article" date="2005" name="PLoS Biol.">
        <title>The genomes of Oryza sativa: a history of duplications.</title>
        <authorList>
            <person name="Yu J."/>
            <person name="Wang J."/>
            <person name="Lin W."/>
            <person name="Li S."/>
            <person name="Li H."/>
            <person name="Zhou J."/>
            <person name="Ni P."/>
            <person name="Dong W."/>
            <person name="Hu S."/>
            <person name="Zeng C."/>
            <person name="Zhang J."/>
            <person name="Zhang Y."/>
            <person name="Li R."/>
            <person name="Xu Z."/>
            <person name="Li S."/>
            <person name="Li X."/>
            <person name="Zheng H."/>
            <person name="Cong L."/>
            <person name="Lin L."/>
            <person name="Yin J."/>
            <person name="Geng J."/>
            <person name="Li G."/>
            <person name="Shi J."/>
            <person name="Liu J."/>
            <person name="Lv H."/>
            <person name="Li J."/>
            <person name="Wang J."/>
            <person name="Deng Y."/>
            <person name="Ran L."/>
            <person name="Shi X."/>
            <person name="Wang X."/>
            <person name="Wu Q."/>
            <person name="Li C."/>
            <person name="Ren X."/>
            <person name="Wang J."/>
            <person name="Wang X."/>
            <person name="Li D."/>
            <person name="Liu D."/>
            <person name="Zhang X."/>
            <person name="Ji Z."/>
            <person name="Zhao W."/>
            <person name="Sun Y."/>
            <person name="Zhang Z."/>
            <person name="Bao J."/>
            <person name="Han Y."/>
            <person name="Dong L."/>
            <person name="Ji J."/>
            <person name="Chen P."/>
            <person name="Wu S."/>
            <person name="Liu J."/>
            <person name="Xiao Y."/>
            <person name="Bu D."/>
            <person name="Tan J."/>
            <person name="Yang L."/>
            <person name="Ye C."/>
            <person name="Zhang J."/>
            <person name="Xu J."/>
            <person name="Zhou Y."/>
            <person name="Yu Y."/>
            <person name="Zhang B."/>
            <person name="Zhuang S."/>
            <person name="Wei H."/>
            <person name="Liu B."/>
            <person name="Lei M."/>
            <person name="Yu H."/>
            <person name="Li Y."/>
            <person name="Xu H."/>
            <person name="Wei S."/>
            <person name="He X."/>
            <person name="Fang L."/>
            <person name="Zhang Z."/>
            <person name="Zhang Y."/>
            <person name="Huang X."/>
            <person name="Su Z."/>
            <person name="Tong W."/>
            <person name="Li J."/>
            <person name="Tong Z."/>
            <person name="Li S."/>
            <person name="Ye J."/>
            <person name="Wang L."/>
            <person name="Fang L."/>
            <person name="Lei T."/>
            <person name="Chen C.-S."/>
            <person name="Chen H.-C."/>
            <person name="Xu Z."/>
            <person name="Li H."/>
            <person name="Huang H."/>
            <person name="Zhang F."/>
            <person name="Xu H."/>
            <person name="Li N."/>
            <person name="Zhao C."/>
            <person name="Li S."/>
            <person name="Dong L."/>
            <person name="Huang Y."/>
            <person name="Li L."/>
            <person name="Xi Y."/>
            <person name="Qi Q."/>
            <person name="Li W."/>
            <person name="Zhang B."/>
            <person name="Hu W."/>
            <person name="Zhang Y."/>
            <person name="Tian X."/>
            <person name="Jiao Y."/>
            <person name="Liang X."/>
            <person name="Jin J."/>
            <person name="Gao L."/>
            <person name="Zheng W."/>
            <person name="Hao B."/>
            <person name="Liu S.-M."/>
            <person name="Wang W."/>
            <person name="Yuan L."/>
            <person name="Cao M."/>
            <person name="McDermott J."/>
            <person name="Samudrala R."/>
            <person name="Wang J."/>
            <person name="Wong G.K.-S."/>
            <person name="Yang H."/>
        </authorList>
    </citation>
    <scope>NUCLEOTIDE SEQUENCE [LARGE SCALE GENOMIC DNA]</scope>
    <source>
        <strain>cv. 93-11</strain>
    </source>
</reference>
<feature type="chain" id="PRO_0000432558" description="Nuclear/nucleolar GTPase 2">
    <location>
        <begin position="1"/>
        <end position="535"/>
    </location>
</feature>
<feature type="domain" description="CP-type G" evidence="2">
    <location>
        <begin position="213"/>
        <end position="374"/>
    </location>
</feature>
<feature type="region of interest" description="Disordered" evidence="3">
    <location>
        <begin position="1"/>
        <end position="42"/>
    </location>
</feature>
<feature type="region of interest" description="G4" evidence="2">
    <location>
        <begin position="261"/>
        <end position="264"/>
    </location>
</feature>
<feature type="region of interest" description="G5" evidence="2">
    <location>
        <begin position="290"/>
        <end position="292"/>
    </location>
</feature>
<feature type="region of interest" description="G1" evidence="2">
    <location>
        <begin position="323"/>
        <end position="330"/>
    </location>
</feature>
<feature type="region of interest" description="G2" evidence="2">
    <location>
        <begin position="349"/>
        <end position="353"/>
    </location>
</feature>
<feature type="region of interest" description="G3" evidence="2">
    <location>
        <begin position="367"/>
        <end position="370"/>
    </location>
</feature>
<feature type="region of interest" description="Disordered" evidence="3">
    <location>
        <begin position="464"/>
        <end position="495"/>
    </location>
</feature>
<feature type="compositionally biased region" description="Basic and acidic residues" evidence="3">
    <location>
        <begin position="17"/>
        <end position="29"/>
    </location>
</feature>
<feature type="compositionally biased region" description="Gly residues" evidence="3">
    <location>
        <begin position="30"/>
        <end position="41"/>
    </location>
</feature>
<gene>
    <name evidence="4" type="primary">NUG2</name>
    <name evidence="5" type="ORF">OsI_11581</name>
</gene>
<proteinExistence type="inferred from homology"/>
<organism evidence="6">
    <name type="scientific">Oryza sativa subsp. indica</name>
    <name type="common">Rice</name>
    <dbReference type="NCBI Taxonomy" id="39946"/>
    <lineage>
        <taxon>Eukaryota</taxon>
        <taxon>Viridiplantae</taxon>
        <taxon>Streptophyta</taxon>
        <taxon>Embryophyta</taxon>
        <taxon>Tracheophyta</taxon>
        <taxon>Spermatophyta</taxon>
        <taxon>Magnoliopsida</taxon>
        <taxon>Liliopsida</taxon>
        <taxon>Poales</taxon>
        <taxon>Poaceae</taxon>
        <taxon>BOP clade</taxon>
        <taxon>Oryzoideae</taxon>
        <taxon>Oryzeae</taxon>
        <taxon>Oryzinae</taxon>
        <taxon>Oryza</taxon>
        <taxon>Oryza sativa</taxon>
    </lineage>
</organism>